<proteinExistence type="inferred from homology"/>
<geneLocation type="plasmid">
    <name>IncFII pMccB17</name>
</geneLocation>
<protein>
    <recommendedName>
        <fullName evidence="2">Protein McbG</fullName>
    </recommendedName>
    <alternativeName>
        <fullName evidence="3">Pentapeptide repeat protein McbG</fullName>
    </alternativeName>
</protein>
<comment type="function">
    <text evidence="1">Together with proteins McbE and McbF this protein causes immunity to the peptide antibiotic microcin B17 (MccB17), which inhibits DNA replication in Enterobacteriaceae by induction of the SOS repair system. McbG alone can provide some protection.</text>
</comment>
<comment type="similarity">
    <text evidence="3">Belongs to the pentapeptide repeat protein family.</text>
</comment>
<organism>
    <name type="scientific">Escherichia coli</name>
    <dbReference type="NCBI Taxonomy" id="562"/>
    <lineage>
        <taxon>Bacteria</taxon>
        <taxon>Pseudomonadati</taxon>
        <taxon>Pseudomonadota</taxon>
        <taxon>Gammaproteobacteria</taxon>
        <taxon>Enterobacterales</taxon>
        <taxon>Enterobacteriaceae</taxon>
        <taxon>Escherichia</taxon>
    </lineage>
</organism>
<name>MCBG_ECOLX</name>
<evidence type="ECO:0000269" key="1">
    <source>
    </source>
</evidence>
<evidence type="ECO:0000303" key="2">
    <source>
    </source>
</evidence>
<evidence type="ECO:0000305" key="3"/>
<sequence length="187" mass="21848">MDIIEKRITKRHLSESELSGVNYYNCIFERIQLDNFNFRDCEFEKCRFVNCSIKNLKLNFFKLIDCEFKDCLLQGVNAADIMFPCTFSLVNCDLRFVDFISLRLQKSIFLSCRFRDCLFEETDLRKSDFTGSEFNNTEFRHSDLSHCDFSMTEGLDINPEINRILSIKIPQEAGLKILKRMGVVVGG</sequence>
<reference key="1">
    <citation type="journal article" date="1988" name="EMBO J.">
        <title>The export of the DNA replication inhibitor microcin B17 provides immunity for the host cell.</title>
        <authorList>
            <person name="Garrido M.D.C."/>
            <person name="Herrero M."/>
            <person name="Kolter R."/>
            <person name="Moreno F."/>
        </authorList>
    </citation>
    <scope>NUCLEOTIDE SEQUENCE [GENOMIC DNA]</scope>
    <scope>ANTIBIOTIC RESISTANCE</scope>
    <source>
        <plasmid>IncFII pMccB17</plasmid>
    </source>
</reference>
<keyword id="KW-0046">Antibiotic resistance</keyword>
<keyword id="KW-0614">Plasmid</keyword>
<gene>
    <name type="primary">mcbG</name>
</gene>
<feature type="chain" id="PRO_0000068575" description="Protein McbG">
    <location>
        <begin position="1"/>
        <end position="187"/>
    </location>
</feature>
<dbReference type="EMBL" id="X07875">
    <property type="protein sequence ID" value="CAA30724.1"/>
    <property type="molecule type" value="Genomic_DNA"/>
</dbReference>
<dbReference type="PIR" id="S00837">
    <property type="entry name" value="S00837"/>
</dbReference>
<dbReference type="RefSeq" id="WP_000351266.1">
    <property type="nucleotide sequence ID" value="NZ_WSWV01000078.1"/>
</dbReference>
<dbReference type="SMR" id="P05530"/>
<dbReference type="GO" id="GO:0046677">
    <property type="term" value="P:response to antibiotic"/>
    <property type="evidence" value="ECO:0007669"/>
    <property type="project" value="UniProtKB-KW"/>
</dbReference>
<dbReference type="Gene3D" id="2.160.20.80">
    <property type="entry name" value="E3 ubiquitin-protein ligase SopA"/>
    <property type="match status" value="1"/>
</dbReference>
<dbReference type="InterPro" id="IPR001646">
    <property type="entry name" value="5peptide_repeat"/>
</dbReference>
<dbReference type="InterPro" id="IPR051082">
    <property type="entry name" value="Pentapeptide-BTB/POZ_domain"/>
</dbReference>
<dbReference type="PANTHER" id="PTHR14136">
    <property type="entry name" value="BTB_POZ DOMAIN-CONTAINING PROTEIN KCTD9"/>
    <property type="match status" value="1"/>
</dbReference>
<dbReference type="PANTHER" id="PTHR14136:SF17">
    <property type="entry name" value="BTB_POZ DOMAIN-CONTAINING PROTEIN KCTD9"/>
    <property type="match status" value="1"/>
</dbReference>
<dbReference type="Pfam" id="PF00805">
    <property type="entry name" value="Pentapeptide"/>
    <property type="match status" value="2"/>
</dbReference>
<dbReference type="SUPFAM" id="SSF141571">
    <property type="entry name" value="Pentapeptide repeat-like"/>
    <property type="match status" value="1"/>
</dbReference>
<accession>P05530</accession>